<comment type="function">
    <text evidence="1">Inhibitor of PPP1CA. Has over 1000-fold higher inhibitory activity when phosphorylated, creating a molecular switch for regulating the phosphorylation status of PPP1CA substrates and smooth muscle contraction (By similarity).</text>
</comment>
<comment type="subcellular location">
    <subcellularLocation>
        <location evidence="1">Cytoplasm</location>
    </subcellularLocation>
</comment>
<comment type="similarity">
    <text evidence="4">Belongs to the PP1 inhibitor family.</text>
</comment>
<reference key="1">
    <citation type="submission" date="2001-02" db="EMBL/GenBank/DDBJ databases">
        <authorList>
            <person name="Yu L."/>
        </authorList>
    </citation>
    <scope>NUCLEOTIDE SEQUENCE [MRNA]</scope>
</reference>
<reference key="2">
    <citation type="journal article" date="2004" name="Biochem. J.">
        <title>GBPI, a novel gastrointestinal- and brain-specific PP1-inhibitory protein, is activated by PKC and inactivated by PKA.</title>
        <authorList>
            <person name="Liu Q.-R."/>
            <person name="Zhang P.-W."/>
            <person name="Lin Z."/>
            <person name="Li Q.-F."/>
            <person name="Woods A.S."/>
            <person name="Troncoso J."/>
            <person name="Uhl G.R."/>
        </authorList>
    </citation>
    <scope>NUCLEOTIDE SEQUENCE [MRNA]</scope>
    <source>
        <tissue>Smooth muscle</tissue>
    </source>
</reference>
<reference key="3">
    <citation type="journal article" date="2012" name="Nat. Commun.">
        <title>Quantitative maps of protein phosphorylation sites across 14 different rat organs and tissues.</title>
        <authorList>
            <person name="Lundby A."/>
            <person name="Secher A."/>
            <person name="Lage K."/>
            <person name="Nordsborg N.B."/>
            <person name="Dmytriyev A."/>
            <person name="Lundby C."/>
            <person name="Olsen J.V."/>
        </authorList>
    </citation>
    <scope>PHOSPHORYLATION [LARGE SCALE ANALYSIS] AT SER-26; SER-128 AND SER-136</scope>
    <scope>IDENTIFICATION BY MASS SPECTROMETRY [LARGE SCALE ANALYSIS]</scope>
</reference>
<sequence length="147" mass="16697">MAAQRLGKRVLSKLQSPSRARGPGGSPSGLQKRHARVTVKYDRRELQRRLDVEKWIDGRLEELYRGREADMPDEVNIDELLELDSEEERCRKIRGLLEACLNPTEDFVQELLAKLRGLHKQPGFPQPSPSDDPSLSPRQDPAHTAPP</sequence>
<accession>Q99MC0</accession>
<protein>
    <recommendedName>
        <fullName>Protein phosphatase 1 regulatory subunit 14A</fullName>
    </recommendedName>
    <alternativeName>
        <fullName>17 kDa PKC-potentiated inhibitory protein of PP1</fullName>
    </alternativeName>
    <alternativeName>
        <fullName>Protein kinase C-potentiated inhibitor protein of 17 kDa</fullName>
        <shortName>CPI-17</shortName>
    </alternativeName>
</protein>
<name>PP14A_RAT</name>
<gene>
    <name type="primary">Ppp1r14a</name>
    <name type="synonym">Cpi</name>
    <name type="synonym">Cpi17</name>
</gene>
<keyword id="KW-0963">Cytoplasm</keyword>
<keyword id="KW-0597">Phosphoprotein</keyword>
<keyword id="KW-0650">Protein phosphatase inhibitor</keyword>
<keyword id="KW-1185">Reference proteome</keyword>
<proteinExistence type="evidence at protein level"/>
<evidence type="ECO:0000250" key="1"/>
<evidence type="ECO:0000250" key="2">
    <source>
        <dbReference type="UniProtKB" id="Q96A00"/>
    </source>
</evidence>
<evidence type="ECO:0000256" key="3">
    <source>
        <dbReference type="SAM" id="MobiDB-lite"/>
    </source>
</evidence>
<evidence type="ECO:0000305" key="4"/>
<evidence type="ECO:0007744" key="5">
    <source>
    </source>
</evidence>
<dbReference type="EMBL" id="AF352572">
    <property type="protein sequence ID" value="AAK35213.1"/>
    <property type="molecule type" value="mRNA"/>
</dbReference>
<dbReference type="EMBL" id="AY050673">
    <property type="protein sequence ID" value="AAL25831.1"/>
    <property type="molecule type" value="mRNA"/>
</dbReference>
<dbReference type="RefSeq" id="NP_569087.1">
    <property type="nucleotide sequence ID" value="NM_130403.2"/>
</dbReference>
<dbReference type="RefSeq" id="XP_017444133.1">
    <property type="nucleotide sequence ID" value="XM_017588644.2"/>
</dbReference>
<dbReference type="RefSeq" id="XP_063117377.1">
    <property type="nucleotide sequence ID" value="XM_063261307.1"/>
</dbReference>
<dbReference type="RefSeq" id="XP_063117388.1">
    <property type="nucleotide sequence ID" value="XM_063261318.1"/>
</dbReference>
<dbReference type="RefSeq" id="XP_063117401.1">
    <property type="nucleotide sequence ID" value="XM_063261331.1"/>
</dbReference>
<dbReference type="SMR" id="Q99MC0"/>
<dbReference type="FunCoup" id="Q99MC0">
    <property type="interactions" value="227"/>
</dbReference>
<dbReference type="STRING" id="10116.ENSRNOP00000028070"/>
<dbReference type="iPTMnet" id="Q99MC0"/>
<dbReference type="PhosphoSitePlus" id="Q99MC0"/>
<dbReference type="PaxDb" id="10116-ENSRNOP00000028070"/>
<dbReference type="GeneID" id="114004"/>
<dbReference type="KEGG" id="rno:114004"/>
<dbReference type="UCSC" id="RGD:620536">
    <property type="organism name" value="rat"/>
</dbReference>
<dbReference type="AGR" id="RGD:620536"/>
<dbReference type="CTD" id="94274"/>
<dbReference type="RGD" id="620536">
    <property type="gene designation" value="Ppp1r14a"/>
</dbReference>
<dbReference type="VEuPathDB" id="HostDB:ENSRNOG00000020676"/>
<dbReference type="eggNOG" id="ENOG502S2I4">
    <property type="taxonomic scope" value="Eukaryota"/>
</dbReference>
<dbReference type="HOGENOM" id="CLU_114155_2_0_1"/>
<dbReference type="InParanoid" id="Q99MC0"/>
<dbReference type="OrthoDB" id="8193882at2759"/>
<dbReference type="PhylomeDB" id="Q99MC0"/>
<dbReference type="TreeFam" id="TF105546"/>
<dbReference type="Reactome" id="R-RNO-5625740">
    <property type="pathway name" value="RHO GTPases activate PKNs"/>
</dbReference>
<dbReference type="PRO" id="PR:Q99MC0"/>
<dbReference type="Proteomes" id="UP000002494">
    <property type="component" value="Chromosome 1"/>
</dbReference>
<dbReference type="Bgee" id="ENSRNOG00000020676">
    <property type="expression patterns" value="Expressed in testis and 20 other cell types or tissues"/>
</dbReference>
<dbReference type="GO" id="GO:0005737">
    <property type="term" value="C:cytoplasm"/>
    <property type="evidence" value="ECO:0007669"/>
    <property type="project" value="UniProtKB-SubCell"/>
</dbReference>
<dbReference type="GO" id="GO:0004864">
    <property type="term" value="F:protein phosphatase inhibitor activity"/>
    <property type="evidence" value="ECO:0000304"/>
    <property type="project" value="RGD"/>
</dbReference>
<dbReference type="GO" id="GO:0004865">
    <property type="term" value="F:protein serine/threonine phosphatase inhibitor activity"/>
    <property type="evidence" value="ECO:0000318"/>
    <property type="project" value="GO_Central"/>
</dbReference>
<dbReference type="GO" id="GO:0071466">
    <property type="term" value="P:cellular response to xenobiotic stimulus"/>
    <property type="evidence" value="ECO:0000266"/>
    <property type="project" value="RGD"/>
</dbReference>
<dbReference type="FunFam" id="1.10.150.220:FF:000002">
    <property type="entry name" value="protein phosphatase 1 regulatory subunit 14A"/>
    <property type="match status" value="1"/>
</dbReference>
<dbReference type="Gene3D" id="1.10.150.220">
    <property type="entry name" value="CPI-17"/>
    <property type="match status" value="1"/>
</dbReference>
<dbReference type="InterPro" id="IPR008025">
    <property type="entry name" value="CPI-17"/>
</dbReference>
<dbReference type="InterPro" id="IPR036658">
    <property type="entry name" value="CPI-17_sf"/>
</dbReference>
<dbReference type="PANTHER" id="PTHR16188">
    <property type="entry name" value="PROTEIN PHOSPHATASE 1 INHIBITOR POTENTIATED BY PROTEIN KINASE C"/>
    <property type="match status" value="1"/>
</dbReference>
<dbReference type="PANTHER" id="PTHR16188:SF4">
    <property type="entry name" value="PROTEIN PHOSPHATASE 1 REGULATORY SUBUNIT 14A"/>
    <property type="match status" value="1"/>
</dbReference>
<dbReference type="Pfam" id="PF05361">
    <property type="entry name" value="PP1_inhibitor"/>
    <property type="match status" value="1"/>
</dbReference>
<dbReference type="SUPFAM" id="SSF81790">
    <property type="entry name" value="Myosin phosphatase inhibitor 17kDa protein, CPI-17"/>
    <property type="match status" value="1"/>
</dbReference>
<organism>
    <name type="scientific">Rattus norvegicus</name>
    <name type="common">Rat</name>
    <dbReference type="NCBI Taxonomy" id="10116"/>
    <lineage>
        <taxon>Eukaryota</taxon>
        <taxon>Metazoa</taxon>
        <taxon>Chordata</taxon>
        <taxon>Craniata</taxon>
        <taxon>Vertebrata</taxon>
        <taxon>Euteleostomi</taxon>
        <taxon>Mammalia</taxon>
        <taxon>Eutheria</taxon>
        <taxon>Euarchontoglires</taxon>
        <taxon>Glires</taxon>
        <taxon>Rodentia</taxon>
        <taxon>Myomorpha</taxon>
        <taxon>Muroidea</taxon>
        <taxon>Muridae</taxon>
        <taxon>Murinae</taxon>
        <taxon>Rattus</taxon>
    </lineage>
</organism>
<feature type="chain" id="PRO_0000071489" description="Protein phosphatase 1 regulatory subunit 14A">
    <location>
        <begin position="1"/>
        <end position="147"/>
    </location>
</feature>
<feature type="region of interest" description="Disordered" evidence="3">
    <location>
        <begin position="1"/>
        <end position="37"/>
    </location>
</feature>
<feature type="region of interest" description="Inhibitory">
    <location>
        <begin position="35"/>
        <end position="120"/>
    </location>
</feature>
<feature type="region of interest" description="Disordered" evidence="3">
    <location>
        <begin position="118"/>
        <end position="147"/>
    </location>
</feature>
<feature type="compositionally biased region" description="Basic residues" evidence="3">
    <location>
        <begin position="1"/>
        <end position="11"/>
    </location>
</feature>
<feature type="modified residue" description="Phosphoserine" evidence="5">
    <location>
        <position position="26"/>
    </location>
</feature>
<feature type="modified residue" description="Phosphothreonine" evidence="2">
    <location>
        <position position="38"/>
    </location>
</feature>
<feature type="modified residue" description="Phosphoserine" evidence="5">
    <location>
        <position position="128"/>
    </location>
</feature>
<feature type="modified residue" description="Phosphoserine" evidence="2">
    <location>
        <position position="134"/>
    </location>
</feature>
<feature type="modified residue" description="Phosphoserine" evidence="5">
    <location>
        <position position="136"/>
    </location>
</feature>